<keyword id="KW-0067">ATP-binding</keyword>
<keyword id="KW-0133">Cell shape</keyword>
<keyword id="KW-0961">Cell wall biogenesis/degradation</keyword>
<keyword id="KW-0903">Direct protein sequencing</keyword>
<keyword id="KW-0436">Ligase</keyword>
<keyword id="KW-0460">Magnesium</keyword>
<keyword id="KW-0479">Metal-binding</keyword>
<keyword id="KW-0547">Nucleotide-binding</keyword>
<keyword id="KW-0573">Peptidoglycan synthesis</keyword>
<sequence length="421" mass="49581">MMNSIENEEFIPILLGSDMNVYGMARSFNEAYGKICQAYASDQLAPTRYSKIVNVEVIPGFDKDPVFIETMLRLAKERYSDKSKKYLLIACGDGYAELISQHKQELSEYFICPYIDYSLFERLINKVSFYEVCEEYDLPYPKTLIVREEMLVNGHLEQELPFEFPVALKPANSVEYLSVQFEGRKKAFILETREEFDLILGRIYEAGYKSEMIVQDFIPGDDSNMRVLNAYVDEDHQVRMMCLGHPLLEDPTPASIGNYVVIMPDYNEKIYQTIKAFLEKIEYTGFANFDMKYDPRDGEYKLFEINLRQGRSSFFVTLNGLNLARFVTEDRVFNKPFVETTYGTNQSDKARLWMGVPKKIFLEYARENEDKKLAEQMIKENRYGTTVFYEKDRSIKRWLLMKYMFHNYIPRFKKYFHVKEG</sequence>
<comment type="function">
    <text evidence="3">Catalyzes the addition of D-aspartate onto the lysine residue in the peptidoglycan precursor UDP-MurNAc-pentapeptide. The ligation occurs between the beta-carboxylate of D-Asp and the epsilon-amino group of L-Lys. Is highly specific for D-aspartate, as L-aspartate, D-glutamate, D-alanine, D-iso-asparagine and D-malate are not substrates.</text>
</comment>
<comment type="catalytic activity">
    <reaction evidence="3">
        <text>[beta-GlcNAc-(1-&gt;4)-Mur2Ac(oyl-L-Ala-gamma-D-Glu-L-Lys-D-Ala-D-Ala)](n) + n D-aspartate + n ATP = [beta-GlcNAc-(1-&gt;4)-Mur2Ac(oyl-L-Ala-gamma-D-Glu-6-N-(beta-D-Asp)-L-Lys-D-Ala-D-Ala)]n + n ADP + n phosphate + n H(+)</text>
        <dbReference type="Rhea" id="RHEA:10752"/>
        <dbReference type="Rhea" id="RHEA-COMP:14481"/>
        <dbReference type="Rhea" id="RHEA-COMP:14482"/>
        <dbReference type="ChEBI" id="CHEBI:15378"/>
        <dbReference type="ChEBI" id="CHEBI:29990"/>
        <dbReference type="ChEBI" id="CHEBI:30616"/>
        <dbReference type="ChEBI" id="CHEBI:43474"/>
        <dbReference type="ChEBI" id="CHEBI:76539"/>
        <dbReference type="ChEBI" id="CHEBI:140312"/>
        <dbReference type="ChEBI" id="CHEBI:456216"/>
        <dbReference type="EC" id="6.3.1.12"/>
    </reaction>
</comment>
<comment type="cofactor">
    <cofactor evidence="4">
        <name>Mg(2+)</name>
        <dbReference type="ChEBI" id="CHEBI:18420"/>
    </cofactor>
    <text evidence="4">Binds 2 magnesium ions per subunit.</text>
</comment>
<comment type="pathway">
    <text evidence="3">Cell wall biogenesis; peptidoglycan biosynthesis.</text>
</comment>
<comment type="miscellaneous">
    <text>The substrate D-aspartate is provided by the coexpressed aspartate racemase, whose gene is adjacent to that of the D-aspartate ligase.</text>
</comment>
<gene>
    <name type="ordered locus">EFAU004_01690</name>
</gene>
<protein>
    <recommendedName>
        <fullName>D-aspartate ligase</fullName>
        <ecNumber>6.3.1.12</ecNumber>
    </recommendedName>
    <alternativeName>
        <fullName>Asl(fm)</fullName>
    </alternativeName>
    <alternativeName>
        <fullName>UDP-MurNAc-pentapeptide:D-aspartate ligase</fullName>
    </alternativeName>
</protein>
<reference key="1">
    <citation type="journal article" date="2012" name="J. Bacteriol.">
        <title>Comparative analysis of the first complete Enterococcus faecium genome.</title>
        <authorList>
            <person name="Lam M.M."/>
            <person name="Seemann T."/>
            <person name="Bulach D.M."/>
            <person name="Gladman S.L."/>
            <person name="Chen H."/>
            <person name="Haring V."/>
            <person name="Moore R.J."/>
            <person name="Ballard S."/>
            <person name="Grayson M.L."/>
            <person name="Johnson P.D."/>
            <person name="Howden B.P."/>
            <person name="Stinear T.P."/>
        </authorList>
    </citation>
    <scope>NUCLEOTIDE SEQUENCE [LARGE SCALE GENOMIC DNA]</scope>
    <source>
        <strain>Aus0004</strain>
    </source>
</reference>
<reference key="2">
    <citation type="journal article" date="2006" name="J. Biol. Chem.">
        <title>Aslfm, the D-aspartate ligase responsible for the addition of D-aspartic acid onto the peptidoglycan precursor of Enterococcus faecium.</title>
        <authorList>
            <person name="Bellais S."/>
            <person name="Arthur M."/>
            <person name="Dubost L."/>
            <person name="Hugonnet J.E."/>
            <person name="Gutmann L."/>
            <person name="van Heijenoort J."/>
            <person name="Legrand R."/>
            <person name="Brouard J.P."/>
            <person name="Rice L."/>
            <person name="Mainardi J.L."/>
        </authorList>
    </citation>
    <scope>PROTEIN SEQUENCE OF N-TERMINUS</scope>
    <scope>IDENTIFICATION</scope>
    <scope>FUNCTION</scope>
    <scope>CATALYTIC ACTIVITY</scope>
    <scope>SUBSTRATE SPECIFICITY</scope>
    <scope>COFACTOR</scope>
    <scope>PATHWAY</scope>
    <source>
        <strain>D359</strain>
    </source>
</reference>
<name>ASL_ENTFU</name>
<proteinExistence type="evidence at protein level"/>
<dbReference type="EC" id="6.3.1.12"/>
<dbReference type="EMBL" id="CP003351">
    <property type="protein sequence ID" value="AFC63774.1"/>
    <property type="molecule type" value="Genomic_DNA"/>
</dbReference>
<dbReference type="KEGG" id="efc:EFAU004_01690"/>
<dbReference type="HOGENOM" id="CLU_054906_0_0_9"/>
<dbReference type="BioCyc" id="EFAE1155766:G1H3H-1784-MONOMER"/>
<dbReference type="UniPathway" id="UPA00219"/>
<dbReference type="GO" id="GO:0005524">
    <property type="term" value="F:ATP binding"/>
    <property type="evidence" value="ECO:0007669"/>
    <property type="project" value="UniProtKB-KW"/>
</dbReference>
<dbReference type="GO" id="GO:0034025">
    <property type="term" value="F:D-aspartate ligase activity"/>
    <property type="evidence" value="ECO:0007669"/>
    <property type="project" value="UniProtKB-EC"/>
</dbReference>
<dbReference type="GO" id="GO:0046872">
    <property type="term" value="F:metal ion binding"/>
    <property type="evidence" value="ECO:0007669"/>
    <property type="project" value="UniProtKB-KW"/>
</dbReference>
<dbReference type="GO" id="GO:0071555">
    <property type="term" value="P:cell wall organization"/>
    <property type="evidence" value="ECO:0007669"/>
    <property type="project" value="UniProtKB-KW"/>
</dbReference>
<dbReference type="GO" id="GO:0009252">
    <property type="term" value="P:peptidoglycan biosynthetic process"/>
    <property type="evidence" value="ECO:0007669"/>
    <property type="project" value="UniProtKB-UniPathway"/>
</dbReference>
<dbReference type="GO" id="GO:0008360">
    <property type="term" value="P:regulation of cell shape"/>
    <property type="evidence" value="ECO:0007669"/>
    <property type="project" value="UniProtKB-KW"/>
</dbReference>
<dbReference type="Gene3D" id="3.30.470.20">
    <property type="entry name" value="ATP-grasp fold, B domain"/>
    <property type="match status" value="1"/>
</dbReference>
<dbReference type="InterPro" id="IPR011761">
    <property type="entry name" value="ATP-grasp"/>
</dbReference>
<dbReference type="SUPFAM" id="SSF56059">
    <property type="entry name" value="Glutathione synthetase ATP-binding domain-like"/>
    <property type="match status" value="1"/>
</dbReference>
<dbReference type="PROSITE" id="PS50975">
    <property type="entry name" value="ATP_GRASP"/>
    <property type="match status" value="1"/>
</dbReference>
<organism>
    <name type="scientific">Enterococcus faecium (strain Aus0004)</name>
    <dbReference type="NCBI Taxonomy" id="1155766"/>
    <lineage>
        <taxon>Bacteria</taxon>
        <taxon>Bacillati</taxon>
        <taxon>Bacillota</taxon>
        <taxon>Bacilli</taxon>
        <taxon>Lactobacillales</taxon>
        <taxon>Enterococcaceae</taxon>
        <taxon>Enterococcus</taxon>
    </lineage>
</organism>
<feature type="initiator methionine" description="Removed">
    <location>
        <position position="1"/>
    </location>
</feature>
<feature type="chain" id="PRO_0000418973" description="D-aspartate ligase">
    <location>
        <begin position="2"/>
        <end position="421"/>
    </location>
</feature>
<feature type="domain" description="ATP-grasp" evidence="2">
    <location>
        <begin position="130"/>
        <end position="332"/>
    </location>
</feature>
<feature type="binding site" evidence="2">
    <location>
        <begin position="161"/>
        <end position="224"/>
    </location>
    <ligand>
        <name>ATP</name>
        <dbReference type="ChEBI" id="CHEBI:30616"/>
    </ligand>
</feature>
<feature type="binding site" evidence="1">
    <location>
        <position position="290"/>
    </location>
    <ligand>
        <name>Mg(2+)</name>
        <dbReference type="ChEBI" id="CHEBI:18420"/>
        <label>1</label>
    </ligand>
</feature>
<feature type="binding site" evidence="1">
    <location>
        <position position="304"/>
    </location>
    <ligand>
        <name>Mg(2+)</name>
        <dbReference type="ChEBI" id="CHEBI:18420"/>
        <label>1</label>
    </ligand>
</feature>
<feature type="binding site" evidence="1">
    <location>
        <position position="304"/>
    </location>
    <ligand>
        <name>Mg(2+)</name>
        <dbReference type="ChEBI" id="CHEBI:18420"/>
        <label>2</label>
    </ligand>
</feature>
<feature type="binding site" evidence="1">
    <location>
        <position position="306"/>
    </location>
    <ligand>
        <name>Mg(2+)</name>
        <dbReference type="ChEBI" id="CHEBI:18420"/>
        <label>2</label>
    </ligand>
</feature>
<accession>H8L902</accession>
<evidence type="ECO:0000250" key="1"/>
<evidence type="ECO:0000255" key="2">
    <source>
        <dbReference type="PROSITE-ProRule" id="PRU00409"/>
    </source>
</evidence>
<evidence type="ECO:0000269" key="3">
    <source>
    </source>
</evidence>
<evidence type="ECO:0000305" key="4">
    <source>
    </source>
</evidence>